<reference key="1">
    <citation type="submission" date="2008-02" db="EMBL/GenBank/DDBJ databases">
        <title>Complete sequence of Yersinia pseudotuberculosis YPIII.</title>
        <authorList>
            <consortium name="US DOE Joint Genome Institute"/>
            <person name="Copeland A."/>
            <person name="Lucas S."/>
            <person name="Lapidus A."/>
            <person name="Glavina del Rio T."/>
            <person name="Dalin E."/>
            <person name="Tice H."/>
            <person name="Bruce D."/>
            <person name="Goodwin L."/>
            <person name="Pitluck S."/>
            <person name="Munk A.C."/>
            <person name="Brettin T."/>
            <person name="Detter J.C."/>
            <person name="Han C."/>
            <person name="Tapia R."/>
            <person name="Schmutz J."/>
            <person name="Larimer F."/>
            <person name="Land M."/>
            <person name="Hauser L."/>
            <person name="Challacombe J.F."/>
            <person name="Green L."/>
            <person name="Lindler L.E."/>
            <person name="Nikolich M.P."/>
            <person name="Richardson P."/>
        </authorList>
    </citation>
    <scope>NUCLEOTIDE SEQUENCE [LARGE SCALE GENOMIC DNA]</scope>
    <source>
        <strain>YPIII</strain>
    </source>
</reference>
<name>NAPA_YERPY</name>
<sequence length="830" mass="93256">MKLSRRDFMKANAAVAAAAAAGMTIPTVAKAVGETTNAIKWDKAPCRFCGTGCGVLVGTQNGRIVASQGDPDSPVNRGLNCIKGYFLPKIMYGKDRLTQPLLRMKDGQYDKEGDFTPISWEKAFDIMELKFKNALKEKGPTAVGMFGSGQWTVWEGYAALKLLKGGFRSNNLDPNARHCMASSVVGFMRTFGMDEPMGCYDDIEEADAFVLWGSNMAEMHPVLWSRMTSRRLTNAHVRIAVLSTYEHRSFELADNPIVFTPQTDLVIMNYIANYIIQNNAVDKDFLAQHVNFRRGATDIGYGLRPTHPLEKAAKNPGSDASEPMSFEDFKTFVAEYTLEKTAKMSGVPEDQLESLAQLYADPKVKLVSYWTMGFNQHTRGVWANNMCYNLHLLTGKISTPGSGPFSLTGQPSACGTAREVGTFSHRLPADMVVTNEKHRQIAETTWQLPAGTIPEKVGLHAVAQDRALKDGTLNAYWVMCNNNMQAGPNINEERMPGWRDPRNFIVVSDPYPTISALSADLILPTSMWVEKEGAYGNAERRTQFWRQQVPSPGEAKSDLWQIVEFAKRFNVEEVWPAELVNQKPEYRGKNLYEVLFANDVVSKYPLSEIPDDQLNDEARDFGFYIQKGLFEEYASFGRGHAHDLAPFDVYHQVRGLRWPVVDGKETLWRYREGFDPFVPKGEEVRFYGKPDGKAVIFALPYEPAAESPDQEYDLWLSTGRVLEHWHTGSMTRRVPELHRAFPEAVLFIHPLDAKARGLHRGDKVKVISRRGEVISLVETRGRNRPPRGLVYMPFFDAAQLVNNLTLDATDPLSKETDFKKCAVKLERVVA</sequence>
<evidence type="ECO:0000255" key="1">
    <source>
        <dbReference type="HAMAP-Rule" id="MF_01630"/>
    </source>
</evidence>
<dbReference type="EC" id="1.9.6.1" evidence="1"/>
<dbReference type="EMBL" id="CP000950">
    <property type="protein sequence ID" value="ACA67681.1"/>
    <property type="molecule type" value="Genomic_DNA"/>
</dbReference>
<dbReference type="RefSeq" id="WP_011171900.1">
    <property type="nucleotide sequence ID" value="NZ_CP009792.1"/>
</dbReference>
<dbReference type="SMR" id="B1JSJ0"/>
<dbReference type="GeneID" id="49785228"/>
<dbReference type="KEGG" id="ypy:YPK_1387"/>
<dbReference type="PATRIC" id="fig|502800.11.peg.2024"/>
<dbReference type="GO" id="GO:0016020">
    <property type="term" value="C:membrane"/>
    <property type="evidence" value="ECO:0007669"/>
    <property type="project" value="TreeGrafter"/>
</dbReference>
<dbReference type="GO" id="GO:0009325">
    <property type="term" value="C:nitrate reductase complex"/>
    <property type="evidence" value="ECO:0007669"/>
    <property type="project" value="TreeGrafter"/>
</dbReference>
<dbReference type="GO" id="GO:0042597">
    <property type="term" value="C:periplasmic space"/>
    <property type="evidence" value="ECO:0007669"/>
    <property type="project" value="UniProtKB-SubCell"/>
</dbReference>
<dbReference type="GO" id="GO:0051539">
    <property type="term" value="F:4 iron, 4 sulfur cluster binding"/>
    <property type="evidence" value="ECO:0007669"/>
    <property type="project" value="UniProtKB-KW"/>
</dbReference>
<dbReference type="GO" id="GO:0009055">
    <property type="term" value="F:electron transfer activity"/>
    <property type="evidence" value="ECO:0007669"/>
    <property type="project" value="UniProtKB-UniRule"/>
</dbReference>
<dbReference type="GO" id="GO:0005506">
    <property type="term" value="F:iron ion binding"/>
    <property type="evidence" value="ECO:0007669"/>
    <property type="project" value="UniProtKB-UniRule"/>
</dbReference>
<dbReference type="GO" id="GO:0030151">
    <property type="term" value="F:molybdenum ion binding"/>
    <property type="evidence" value="ECO:0007669"/>
    <property type="project" value="InterPro"/>
</dbReference>
<dbReference type="GO" id="GO:0043546">
    <property type="term" value="F:molybdopterin cofactor binding"/>
    <property type="evidence" value="ECO:0007669"/>
    <property type="project" value="InterPro"/>
</dbReference>
<dbReference type="GO" id="GO:0050140">
    <property type="term" value="F:nitrate reductase (cytochrome) activity"/>
    <property type="evidence" value="ECO:0007669"/>
    <property type="project" value="UniProtKB-EC"/>
</dbReference>
<dbReference type="GO" id="GO:0045333">
    <property type="term" value="P:cellular respiration"/>
    <property type="evidence" value="ECO:0007669"/>
    <property type="project" value="UniProtKB-ARBA"/>
</dbReference>
<dbReference type="GO" id="GO:0006777">
    <property type="term" value="P:Mo-molybdopterin cofactor biosynthetic process"/>
    <property type="evidence" value="ECO:0007669"/>
    <property type="project" value="UniProtKB-UniRule"/>
</dbReference>
<dbReference type="GO" id="GO:0042128">
    <property type="term" value="P:nitrate assimilation"/>
    <property type="evidence" value="ECO:0007669"/>
    <property type="project" value="UniProtKB-UniRule"/>
</dbReference>
<dbReference type="CDD" id="cd02791">
    <property type="entry name" value="MopB_CT_Nitrate-R-NapA-like"/>
    <property type="match status" value="1"/>
</dbReference>
<dbReference type="CDD" id="cd02754">
    <property type="entry name" value="MopB_Nitrate-R-NapA-like"/>
    <property type="match status" value="1"/>
</dbReference>
<dbReference type="FunFam" id="2.40.40.20:FF:000005">
    <property type="entry name" value="Periplasmic nitrate reductase"/>
    <property type="match status" value="1"/>
</dbReference>
<dbReference type="Gene3D" id="2.40.40.20">
    <property type="match status" value="1"/>
</dbReference>
<dbReference type="Gene3D" id="3.30.200.210">
    <property type="match status" value="1"/>
</dbReference>
<dbReference type="Gene3D" id="3.40.50.740">
    <property type="match status" value="1"/>
</dbReference>
<dbReference type="Gene3D" id="3.40.228.10">
    <property type="entry name" value="Dimethylsulfoxide Reductase, domain 2"/>
    <property type="match status" value="1"/>
</dbReference>
<dbReference type="HAMAP" id="MF_01630">
    <property type="entry name" value="Nitrate_reduct_NapA"/>
    <property type="match status" value="1"/>
</dbReference>
<dbReference type="InterPro" id="IPR009010">
    <property type="entry name" value="Asp_de-COase-like_dom_sf"/>
</dbReference>
<dbReference type="InterPro" id="IPR041957">
    <property type="entry name" value="CT_Nitrate-R-NapA-like"/>
</dbReference>
<dbReference type="InterPro" id="IPR006657">
    <property type="entry name" value="MoPterin_dinucl-bd_dom"/>
</dbReference>
<dbReference type="InterPro" id="IPR006656">
    <property type="entry name" value="Mopterin_OxRdtase"/>
</dbReference>
<dbReference type="InterPro" id="IPR006963">
    <property type="entry name" value="Mopterin_OxRdtase_4Fe-4S_dom"/>
</dbReference>
<dbReference type="InterPro" id="IPR027467">
    <property type="entry name" value="MopterinOxRdtase_cofactor_BS"/>
</dbReference>
<dbReference type="InterPro" id="IPR010051">
    <property type="entry name" value="Periplasm_NO3_reductase_lsu"/>
</dbReference>
<dbReference type="InterPro" id="IPR050123">
    <property type="entry name" value="Prok_molybdopt-oxidoreductase"/>
</dbReference>
<dbReference type="InterPro" id="IPR006311">
    <property type="entry name" value="TAT_signal"/>
</dbReference>
<dbReference type="InterPro" id="IPR019546">
    <property type="entry name" value="TAT_signal_bac_arc"/>
</dbReference>
<dbReference type="NCBIfam" id="TIGR01706">
    <property type="entry name" value="NAPA"/>
    <property type="match status" value="1"/>
</dbReference>
<dbReference type="NCBIfam" id="NF010055">
    <property type="entry name" value="PRK13532.1"/>
    <property type="match status" value="1"/>
</dbReference>
<dbReference type="NCBIfam" id="TIGR01409">
    <property type="entry name" value="TAT_signal_seq"/>
    <property type="match status" value="1"/>
</dbReference>
<dbReference type="PANTHER" id="PTHR43105:SF11">
    <property type="entry name" value="PERIPLASMIC NITRATE REDUCTASE"/>
    <property type="match status" value="1"/>
</dbReference>
<dbReference type="PANTHER" id="PTHR43105">
    <property type="entry name" value="RESPIRATORY NITRATE REDUCTASE"/>
    <property type="match status" value="1"/>
</dbReference>
<dbReference type="Pfam" id="PF04879">
    <property type="entry name" value="Molybdop_Fe4S4"/>
    <property type="match status" value="1"/>
</dbReference>
<dbReference type="Pfam" id="PF00384">
    <property type="entry name" value="Molybdopterin"/>
    <property type="match status" value="1"/>
</dbReference>
<dbReference type="Pfam" id="PF01568">
    <property type="entry name" value="Molydop_binding"/>
    <property type="match status" value="1"/>
</dbReference>
<dbReference type="Pfam" id="PF10518">
    <property type="entry name" value="TAT_signal"/>
    <property type="match status" value="1"/>
</dbReference>
<dbReference type="SMART" id="SM00926">
    <property type="entry name" value="Molybdop_Fe4S4"/>
    <property type="match status" value="1"/>
</dbReference>
<dbReference type="SUPFAM" id="SSF50692">
    <property type="entry name" value="ADC-like"/>
    <property type="match status" value="1"/>
</dbReference>
<dbReference type="SUPFAM" id="SSF53706">
    <property type="entry name" value="Formate dehydrogenase/DMSO reductase, domains 1-3"/>
    <property type="match status" value="1"/>
</dbReference>
<dbReference type="PROSITE" id="PS51669">
    <property type="entry name" value="4FE4S_MOW_BIS_MGD"/>
    <property type="match status" value="1"/>
</dbReference>
<dbReference type="PROSITE" id="PS00551">
    <property type="entry name" value="MOLYBDOPTERIN_PROK_1"/>
    <property type="match status" value="1"/>
</dbReference>
<dbReference type="PROSITE" id="PS51318">
    <property type="entry name" value="TAT"/>
    <property type="match status" value="1"/>
</dbReference>
<comment type="function">
    <text evidence="1">Catalytic subunit of the periplasmic nitrate reductase complex NapAB. Receives electrons from NapB and catalyzes the reduction of nitrate to nitrite.</text>
</comment>
<comment type="catalytic activity">
    <reaction evidence="1">
        <text>2 Fe(II)-[cytochrome] + nitrate + 2 H(+) = 2 Fe(III)-[cytochrome] + nitrite + H2O</text>
        <dbReference type="Rhea" id="RHEA:12909"/>
        <dbReference type="Rhea" id="RHEA-COMP:11777"/>
        <dbReference type="Rhea" id="RHEA-COMP:11778"/>
        <dbReference type="ChEBI" id="CHEBI:15377"/>
        <dbReference type="ChEBI" id="CHEBI:15378"/>
        <dbReference type="ChEBI" id="CHEBI:16301"/>
        <dbReference type="ChEBI" id="CHEBI:17632"/>
        <dbReference type="ChEBI" id="CHEBI:29033"/>
        <dbReference type="ChEBI" id="CHEBI:29034"/>
        <dbReference type="EC" id="1.9.6.1"/>
    </reaction>
</comment>
<comment type="cofactor">
    <cofactor evidence="1">
        <name>[4Fe-4S] cluster</name>
        <dbReference type="ChEBI" id="CHEBI:49883"/>
    </cofactor>
    <text evidence="1">Binds 1 [4Fe-4S] cluster.</text>
</comment>
<comment type="cofactor">
    <cofactor evidence="1">
        <name>Mo-bis(molybdopterin guanine dinucleotide)</name>
        <dbReference type="ChEBI" id="CHEBI:60539"/>
    </cofactor>
    <text evidence="1">Binds 1 molybdenum-bis(molybdopterin guanine dinucleotide) (Mo-bis-MGD) cofactor per subunit.</text>
</comment>
<comment type="subunit">
    <text evidence="1">Component of the periplasmic nitrate reductase NapAB complex composed of NapA and NapB.</text>
</comment>
<comment type="subcellular location">
    <subcellularLocation>
        <location evidence="1">Periplasm</location>
    </subcellularLocation>
</comment>
<comment type="PTM">
    <text evidence="1">Predicted to be exported by the Tat system. The position of the signal peptide cleavage has not been experimentally proven.</text>
</comment>
<comment type="similarity">
    <text evidence="1">Belongs to the prokaryotic molybdopterin-containing oxidoreductase family. NasA/NapA/NarB subfamily.</text>
</comment>
<proteinExistence type="inferred from homology"/>
<organism>
    <name type="scientific">Yersinia pseudotuberculosis serotype O:3 (strain YPIII)</name>
    <dbReference type="NCBI Taxonomy" id="502800"/>
    <lineage>
        <taxon>Bacteria</taxon>
        <taxon>Pseudomonadati</taxon>
        <taxon>Pseudomonadota</taxon>
        <taxon>Gammaproteobacteria</taxon>
        <taxon>Enterobacterales</taxon>
        <taxon>Yersiniaceae</taxon>
        <taxon>Yersinia</taxon>
    </lineage>
</organism>
<keyword id="KW-0004">4Fe-4S</keyword>
<keyword id="KW-0249">Electron transport</keyword>
<keyword id="KW-0408">Iron</keyword>
<keyword id="KW-0411">Iron-sulfur</keyword>
<keyword id="KW-0479">Metal-binding</keyword>
<keyword id="KW-0500">Molybdenum</keyword>
<keyword id="KW-0534">Nitrate assimilation</keyword>
<keyword id="KW-0560">Oxidoreductase</keyword>
<keyword id="KW-0574">Periplasm</keyword>
<keyword id="KW-0732">Signal</keyword>
<keyword id="KW-0813">Transport</keyword>
<gene>
    <name evidence="1" type="primary">napA</name>
    <name type="ordered locus">YPK_1387</name>
</gene>
<feature type="signal peptide" description="Tat-type signal" evidence="1">
    <location>
        <begin position="1"/>
        <end position="31"/>
    </location>
</feature>
<feature type="chain" id="PRO_5000316244" description="Periplasmic nitrate reductase" evidence="1">
    <location>
        <begin position="32"/>
        <end position="830"/>
    </location>
</feature>
<feature type="domain" description="4Fe-4S Mo/W bis-MGD-type" evidence="1">
    <location>
        <begin position="39"/>
        <end position="95"/>
    </location>
</feature>
<feature type="binding site" evidence="1">
    <location>
        <position position="46"/>
    </location>
    <ligand>
        <name>[4Fe-4S] cluster</name>
        <dbReference type="ChEBI" id="CHEBI:49883"/>
    </ligand>
</feature>
<feature type="binding site" evidence="1">
    <location>
        <position position="49"/>
    </location>
    <ligand>
        <name>[4Fe-4S] cluster</name>
        <dbReference type="ChEBI" id="CHEBI:49883"/>
    </ligand>
</feature>
<feature type="binding site" evidence="1">
    <location>
        <position position="53"/>
    </location>
    <ligand>
        <name>[4Fe-4S] cluster</name>
        <dbReference type="ChEBI" id="CHEBI:49883"/>
    </ligand>
</feature>
<feature type="binding site" evidence="1">
    <location>
        <position position="81"/>
    </location>
    <ligand>
        <name>[4Fe-4S] cluster</name>
        <dbReference type="ChEBI" id="CHEBI:49883"/>
    </ligand>
</feature>
<feature type="binding site" evidence="1">
    <location>
        <position position="83"/>
    </location>
    <ligand>
        <name>Mo-bis(molybdopterin guanine dinucleotide)</name>
        <dbReference type="ChEBI" id="CHEBI:60539"/>
    </ligand>
</feature>
<feature type="binding site" evidence="1">
    <location>
        <position position="150"/>
    </location>
    <ligand>
        <name>Mo-bis(molybdopterin guanine dinucleotide)</name>
        <dbReference type="ChEBI" id="CHEBI:60539"/>
    </ligand>
</feature>
<feature type="binding site" evidence="1">
    <location>
        <position position="175"/>
    </location>
    <ligand>
        <name>Mo-bis(molybdopterin guanine dinucleotide)</name>
        <dbReference type="ChEBI" id="CHEBI:60539"/>
    </ligand>
</feature>
<feature type="binding site" evidence="1">
    <location>
        <position position="179"/>
    </location>
    <ligand>
        <name>Mo-bis(molybdopterin guanine dinucleotide)</name>
        <dbReference type="ChEBI" id="CHEBI:60539"/>
    </ligand>
</feature>
<feature type="binding site" evidence="1">
    <location>
        <begin position="212"/>
        <end position="219"/>
    </location>
    <ligand>
        <name>Mo-bis(molybdopterin guanine dinucleotide)</name>
        <dbReference type="ChEBI" id="CHEBI:60539"/>
    </ligand>
</feature>
<feature type="binding site" evidence="1">
    <location>
        <begin position="243"/>
        <end position="247"/>
    </location>
    <ligand>
        <name>Mo-bis(molybdopterin guanine dinucleotide)</name>
        <dbReference type="ChEBI" id="CHEBI:60539"/>
    </ligand>
</feature>
<feature type="binding site" evidence="1">
    <location>
        <begin position="262"/>
        <end position="264"/>
    </location>
    <ligand>
        <name>Mo-bis(molybdopterin guanine dinucleotide)</name>
        <dbReference type="ChEBI" id="CHEBI:60539"/>
    </ligand>
</feature>
<feature type="binding site" evidence="1">
    <location>
        <position position="372"/>
    </location>
    <ligand>
        <name>Mo-bis(molybdopterin guanine dinucleotide)</name>
        <dbReference type="ChEBI" id="CHEBI:60539"/>
    </ligand>
</feature>
<feature type="binding site" evidence="1">
    <location>
        <position position="376"/>
    </location>
    <ligand>
        <name>Mo-bis(molybdopterin guanine dinucleotide)</name>
        <dbReference type="ChEBI" id="CHEBI:60539"/>
    </ligand>
</feature>
<feature type="binding site" evidence="1">
    <location>
        <position position="482"/>
    </location>
    <ligand>
        <name>Mo-bis(molybdopterin guanine dinucleotide)</name>
        <dbReference type="ChEBI" id="CHEBI:60539"/>
    </ligand>
</feature>
<feature type="binding site" evidence="1">
    <location>
        <begin position="508"/>
        <end position="509"/>
    </location>
    <ligand>
        <name>Mo-bis(molybdopterin guanine dinucleotide)</name>
        <dbReference type="ChEBI" id="CHEBI:60539"/>
    </ligand>
</feature>
<feature type="binding site" evidence="1">
    <location>
        <position position="531"/>
    </location>
    <ligand>
        <name>Mo-bis(molybdopterin guanine dinucleotide)</name>
        <dbReference type="ChEBI" id="CHEBI:60539"/>
    </ligand>
</feature>
<feature type="binding site" evidence="1">
    <location>
        <position position="558"/>
    </location>
    <ligand>
        <name>Mo-bis(molybdopterin guanine dinucleotide)</name>
        <dbReference type="ChEBI" id="CHEBI:60539"/>
    </ligand>
</feature>
<feature type="binding site" evidence="1">
    <location>
        <begin position="718"/>
        <end position="727"/>
    </location>
    <ligand>
        <name>Mo-bis(molybdopterin guanine dinucleotide)</name>
        <dbReference type="ChEBI" id="CHEBI:60539"/>
    </ligand>
</feature>
<feature type="binding site" evidence="1">
    <location>
        <position position="794"/>
    </location>
    <ligand>
        <name>substrate</name>
    </ligand>
</feature>
<feature type="binding site" evidence="1">
    <location>
        <position position="802"/>
    </location>
    <ligand>
        <name>Mo-bis(molybdopterin guanine dinucleotide)</name>
        <dbReference type="ChEBI" id="CHEBI:60539"/>
    </ligand>
</feature>
<feature type="binding site" evidence="1">
    <location>
        <position position="819"/>
    </location>
    <ligand>
        <name>Mo-bis(molybdopterin guanine dinucleotide)</name>
        <dbReference type="ChEBI" id="CHEBI:60539"/>
    </ligand>
</feature>
<accession>B1JSJ0</accession>
<protein>
    <recommendedName>
        <fullName evidence="1">Periplasmic nitrate reductase</fullName>
        <ecNumber evidence="1">1.9.6.1</ecNumber>
    </recommendedName>
</protein>